<reference key="1">
    <citation type="journal article" date="2004" name="Science">
        <title>Illuminating the evolutionary history of chlamydiae.</title>
        <authorList>
            <person name="Horn M."/>
            <person name="Collingro A."/>
            <person name="Schmitz-Esser S."/>
            <person name="Beier C.L."/>
            <person name="Purkhold U."/>
            <person name="Fartmann B."/>
            <person name="Brandt P."/>
            <person name="Nyakatura G.J."/>
            <person name="Droege M."/>
            <person name="Frishman D."/>
            <person name="Rattei T."/>
            <person name="Mewes H.-W."/>
            <person name="Wagner M."/>
        </authorList>
    </citation>
    <scope>NUCLEOTIDE SEQUENCE [LARGE SCALE GENOMIC DNA]</scope>
    <source>
        <strain>UWE25</strain>
    </source>
</reference>
<gene>
    <name evidence="1" type="primary">atpB</name>
    <name type="ordered locus">pc1679</name>
</gene>
<keyword id="KW-0066">ATP synthesis</keyword>
<keyword id="KW-0375">Hydrogen ion transport</keyword>
<keyword id="KW-0406">Ion transport</keyword>
<keyword id="KW-1185">Reference proteome</keyword>
<keyword id="KW-0813">Transport</keyword>
<organism>
    <name type="scientific">Protochlamydia amoebophila (strain UWE25)</name>
    <dbReference type="NCBI Taxonomy" id="264201"/>
    <lineage>
        <taxon>Bacteria</taxon>
        <taxon>Pseudomonadati</taxon>
        <taxon>Chlamydiota</taxon>
        <taxon>Chlamydiia</taxon>
        <taxon>Parachlamydiales</taxon>
        <taxon>Parachlamydiaceae</taxon>
        <taxon>Candidatus Protochlamydia</taxon>
    </lineage>
</organism>
<sequence length="438" mass="48438">MKIVYDRINNMRGNLITITAEGVSLGELARIDLKDGRNIYASVLRIDGDQVTLQVFQTTRGISTSDQVTFLNRQMQAVYGDTLLGRRLSGTGLPIDGGPQVIGESIDIGSTSFNPVKRIVPRDMVRTNIPMIDVFNCLVKSQKIPIFSVPGEPYNALLMRIANQTDADVVIIGGMGLTFKEYQAFIENAETAGTINKTVMFIHRATDPAVECLLVPDMALACAERFATDGKNVLVLLTDMTAFADAIKEIAITMDQVPSNRGYPGSLYSDLASRYEKAVSIEDSGSITVIGVTTMPGDDVTHPVPDNTGYITEGQFYLHHGKIDPFGSLSRLKQLVIGKVTRDDHGDLANAMIRLYAESKKARERQAMGFKLSKWDEKLLTYSHLFEERMMNLEVNYTLEEALDLGWETLAECFLASEVGIKESVISKYWPEIAQISK</sequence>
<protein>
    <recommendedName>
        <fullName evidence="1">V-type ATP synthase beta chain</fullName>
    </recommendedName>
    <alternativeName>
        <fullName evidence="1">V-ATPase subunit B</fullName>
    </alternativeName>
</protein>
<accession>Q6MAJ6</accession>
<dbReference type="EMBL" id="BX908798">
    <property type="protein sequence ID" value="CAF24403.1"/>
    <property type="molecule type" value="Genomic_DNA"/>
</dbReference>
<dbReference type="RefSeq" id="WP_011176225.1">
    <property type="nucleotide sequence ID" value="NC_005861.2"/>
</dbReference>
<dbReference type="SMR" id="Q6MAJ6"/>
<dbReference type="STRING" id="264201.pc1679"/>
<dbReference type="KEGG" id="pcu:PC_RS08035"/>
<dbReference type="eggNOG" id="COG1156">
    <property type="taxonomic scope" value="Bacteria"/>
</dbReference>
<dbReference type="HOGENOM" id="CLU_022916_2_0_0"/>
<dbReference type="OrthoDB" id="9802718at2"/>
<dbReference type="Proteomes" id="UP000000529">
    <property type="component" value="Chromosome"/>
</dbReference>
<dbReference type="GO" id="GO:0005524">
    <property type="term" value="F:ATP binding"/>
    <property type="evidence" value="ECO:0007669"/>
    <property type="project" value="UniProtKB-UniRule"/>
</dbReference>
<dbReference type="GO" id="GO:0046933">
    <property type="term" value="F:proton-transporting ATP synthase activity, rotational mechanism"/>
    <property type="evidence" value="ECO:0007669"/>
    <property type="project" value="UniProtKB-UniRule"/>
</dbReference>
<dbReference type="GO" id="GO:0042777">
    <property type="term" value="P:proton motive force-driven plasma membrane ATP synthesis"/>
    <property type="evidence" value="ECO:0007669"/>
    <property type="project" value="UniProtKB-UniRule"/>
</dbReference>
<dbReference type="CDD" id="cd01135">
    <property type="entry name" value="V_A-ATPase_B"/>
    <property type="match status" value="1"/>
</dbReference>
<dbReference type="Gene3D" id="3.40.50.12240">
    <property type="match status" value="1"/>
</dbReference>
<dbReference type="HAMAP" id="MF_00310">
    <property type="entry name" value="ATP_synth_B_arch"/>
    <property type="match status" value="1"/>
</dbReference>
<dbReference type="InterPro" id="IPR055190">
    <property type="entry name" value="ATP-synt_VA_C"/>
</dbReference>
<dbReference type="InterPro" id="IPR004100">
    <property type="entry name" value="ATPase_F1/V1/A1_a/bsu_N"/>
</dbReference>
<dbReference type="InterPro" id="IPR000194">
    <property type="entry name" value="ATPase_F1/V1/A1_a/bsu_nucl-bd"/>
</dbReference>
<dbReference type="InterPro" id="IPR027417">
    <property type="entry name" value="P-loop_NTPase"/>
</dbReference>
<dbReference type="InterPro" id="IPR022879">
    <property type="entry name" value="V-ATPase_su_B/beta"/>
</dbReference>
<dbReference type="NCBIfam" id="NF002555">
    <property type="entry name" value="PRK02118.1"/>
    <property type="match status" value="1"/>
</dbReference>
<dbReference type="NCBIfam" id="NF003235">
    <property type="entry name" value="PRK04196.1"/>
    <property type="match status" value="1"/>
</dbReference>
<dbReference type="PANTHER" id="PTHR43389">
    <property type="entry name" value="V-TYPE PROTON ATPASE SUBUNIT B"/>
    <property type="match status" value="1"/>
</dbReference>
<dbReference type="PANTHER" id="PTHR43389:SF4">
    <property type="entry name" value="V-TYPE PROTON ATPASE SUBUNIT B"/>
    <property type="match status" value="1"/>
</dbReference>
<dbReference type="Pfam" id="PF00006">
    <property type="entry name" value="ATP-synt_ab"/>
    <property type="match status" value="1"/>
</dbReference>
<dbReference type="Pfam" id="PF02874">
    <property type="entry name" value="ATP-synt_ab_N"/>
    <property type="match status" value="1"/>
</dbReference>
<dbReference type="Pfam" id="PF22919">
    <property type="entry name" value="ATP-synt_VA_C"/>
    <property type="match status" value="1"/>
</dbReference>
<dbReference type="SUPFAM" id="SSF52540">
    <property type="entry name" value="P-loop containing nucleoside triphosphate hydrolases"/>
    <property type="match status" value="1"/>
</dbReference>
<comment type="function">
    <text evidence="1">Produces ATP from ADP in the presence of a proton gradient across the membrane. The V-type beta chain is a regulatory subunit.</text>
</comment>
<comment type="similarity">
    <text evidence="1">Belongs to the ATPase alpha/beta chains family.</text>
</comment>
<feature type="chain" id="PRO_1000059386" description="V-type ATP synthase beta chain">
    <location>
        <begin position="1"/>
        <end position="438"/>
    </location>
</feature>
<proteinExistence type="inferred from homology"/>
<name>VATB_PARUW</name>
<evidence type="ECO:0000255" key="1">
    <source>
        <dbReference type="HAMAP-Rule" id="MF_00310"/>
    </source>
</evidence>